<name>RL32_PROA2</name>
<evidence type="ECO:0000255" key="1">
    <source>
        <dbReference type="HAMAP-Rule" id="MF_00340"/>
    </source>
</evidence>
<evidence type="ECO:0000256" key="2">
    <source>
        <dbReference type="SAM" id="MobiDB-lite"/>
    </source>
</evidence>
<evidence type="ECO:0000305" key="3"/>
<gene>
    <name evidence="1" type="primary">rpmF</name>
    <name type="ordered locus">Paes_0179</name>
</gene>
<proteinExistence type="inferred from homology"/>
<accession>B4S3P2</accession>
<feature type="chain" id="PRO_1000120158" description="Large ribosomal subunit protein bL32">
    <location>
        <begin position="1"/>
        <end position="63"/>
    </location>
</feature>
<feature type="region of interest" description="Disordered" evidence="2">
    <location>
        <begin position="1"/>
        <end position="23"/>
    </location>
</feature>
<feature type="compositionally biased region" description="Basic residues" evidence="2">
    <location>
        <begin position="7"/>
        <end position="18"/>
    </location>
</feature>
<comment type="similarity">
    <text evidence="1">Belongs to the bacterial ribosomal protein bL32 family.</text>
</comment>
<dbReference type="EMBL" id="CP001108">
    <property type="protein sequence ID" value="ACF45238.1"/>
    <property type="molecule type" value="Genomic_DNA"/>
</dbReference>
<dbReference type="RefSeq" id="WP_012504775.1">
    <property type="nucleotide sequence ID" value="NC_011059.1"/>
</dbReference>
<dbReference type="SMR" id="B4S3P2"/>
<dbReference type="STRING" id="290512.Paes_0179"/>
<dbReference type="KEGG" id="paa:Paes_0179"/>
<dbReference type="eggNOG" id="COG0333">
    <property type="taxonomic scope" value="Bacteria"/>
</dbReference>
<dbReference type="HOGENOM" id="CLU_129084_1_3_10"/>
<dbReference type="Proteomes" id="UP000002725">
    <property type="component" value="Chromosome"/>
</dbReference>
<dbReference type="GO" id="GO:0015934">
    <property type="term" value="C:large ribosomal subunit"/>
    <property type="evidence" value="ECO:0007669"/>
    <property type="project" value="InterPro"/>
</dbReference>
<dbReference type="GO" id="GO:0003735">
    <property type="term" value="F:structural constituent of ribosome"/>
    <property type="evidence" value="ECO:0007669"/>
    <property type="project" value="InterPro"/>
</dbReference>
<dbReference type="GO" id="GO:0006412">
    <property type="term" value="P:translation"/>
    <property type="evidence" value="ECO:0007669"/>
    <property type="project" value="UniProtKB-UniRule"/>
</dbReference>
<dbReference type="HAMAP" id="MF_00340">
    <property type="entry name" value="Ribosomal_bL32"/>
    <property type="match status" value="1"/>
</dbReference>
<dbReference type="InterPro" id="IPR002677">
    <property type="entry name" value="Ribosomal_bL32"/>
</dbReference>
<dbReference type="InterPro" id="IPR044957">
    <property type="entry name" value="Ribosomal_bL32_bact"/>
</dbReference>
<dbReference type="InterPro" id="IPR011332">
    <property type="entry name" value="Ribosomal_zn-bd"/>
</dbReference>
<dbReference type="NCBIfam" id="TIGR01031">
    <property type="entry name" value="rpmF_bact"/>
    <property type="match status" value="1"/>
</dbReference>
<dbReference type="PANTHER" id="PTHR35534">
    <property type="entry name" value="50S RIBOSOMAL PROTEIN L32"/>
    <property type="match status" value="1"/>
</dbReference>
<dbReference type="PANTHER" id="PTHR35534:SF1">
    <property type="entry name" value="LARGE RIBOSOMAL SUBUNIT PROTEIN BL32"/>
    <property type="match status" value="1"/>
</dbReference>
<dbReference type="Pfam" id="PF01783">
    <property type="entry name" value="Ribosomal_L32p"/>
    <property type="match status" value="1"/>
</dbReference>
<dbReference type="SUPFAM" id="SSF57829">
    <property type="entry name" value="Zn-binding ribosomal proteins"/>
    <property type="match status" value="1"/>
</dbReference>
<keyword id="KW-0687">Ribonucleoprotein</keyword>
<keyword id="KW-0689">Ribosomal protein</keyword>
<sequence length="63" mass="6931">MATPKAKVSKSRRDKRRAQFTARSKAAVTTICPNCGEPTLSHRACRHCGQYRGRVVTKKSANG</sequence>
<organism>
    <name type="scientific">Prosthecochloris aestuarii (strain DSM 271 / SK 413)</name>
    <dbReference type="NCBI Taxonomy" id="290512"/>
    <lineage>
        <taxon>Bacteria</taxon>
        <taxon>Pseudomonadati</taxon>
        <taxon>Chlorobiota</taxon>
        <taxon>Chlorobiia</taxon>
        <taxon>Chlorobiales</taxon>
        <taxon>Chlorobiaceae</taxon>
        <taxon>Prosthecochloris</taxon>
    </lineage>
</organism>
<protein>
    <recommendedName>
        <fullName evidence="1">Large ribosomal subunit protein bL32</fullName>
    </recommendedName>
    <alternativeName>
        <fullName evidence="3">50S ribosomal protein L32</fullName>
    </alternativeName>
</protein>
<reference key="1">
    <citation type="submission" date="2008-06" db="EMBL/GenBank/DDBJ databases">
        <title>Complete sequence of chromosome of Prosthecochloris aestuarii DSM 271.</title>
        <authorList>
            <consortium name="US DOE Joint Genome Institute"/>
            <person name="Lucas S."/>
            <person name="Copeland A."/>
            <person name="Lapidus A."/>
            <person name="Glavina del Rio T."/>
            <person name="Dalin E."/>
            <person name="Tice H."/>
            <person name="Bruce D."/>
            <person name="Goodwin L."/>
            <person name="Pitluck S."/>
            <person name="Schmutz J."/>
            <person name="Larimer F."/>
            <person name="Land M."/>
            <person name="Hauser L."/>
            <person name="Kyrpides N."/>
            <person name="Anderson I."/>
            <person name="Liu Z."/>
            <person name="Li T."/>
            <person name="Zhao F."/>
            <person name="Overmann J."/>
            <person name="Bryant D.A."/>
            <person name="Richardson P."/>
        </authorList>
    </citation>
    <scope>NUCLEOTIDE SEQUENCE [LARGE SCALE GENOMIC DNA]</scope>
    <source>
        <strain>DSM 271 / SK 413</strain>
    </source>
</reference>